<accession>P58187</accession>
<proteinExistence type="inferred from homology"/>
<dbReference type="EC" id="2.7.1.130" evidence="1"/>
<dbReference type="EMBL" id="AJ293329">
    <property type="protein sequence ID" value="CAC33716.1"/>
    <property type="molecule type" value="Genomic_DNA"/>
</dbReference>
<dbReference type="RefSeq" id="WP_012151226.1">
    <property type="nucleotide sequence ID" value="NZ_CP114277.2"/>
</dbReference>
<dbReference type="SMR" id="P58187"/>
<dbReference type="GeneID" id="79937740"/>
<dbReference type="OMA" id="RAFPDHH"/>
<dbReference type="UniPathway" id="UPA00359">
    <property type="reaction ID" value="UER00482"/>
</dbReference>
<dbReference type="GO" id="GO:0005886">
    <property type="term" value="C:plasma membrane"/>
    <property type="evidence" value="ECO:0007669"/>
    <property type="project" value="TreeGrafter"/>
</dbReference>
<dbReference type="GO" id="GO:0005524">
    <property type="term" value="F:ATP binding"/>
    <property type="evidence" value="ECO:0007669"/>
    <property type="project" value="UniProtKB-UniRule"/>
</dbReference>
<dbReference type="GO" id="GO:0009029">
    <property type="term" value="F:tetraacyldisaccharide 4'-kinase activity"/>
    <property type="evidence" value="ECO:0007669"/>
    <property type="project" value="UniProtKB-UniRule"/>
</dbReference>
<dbReference type="GO" id="GO:0009245">
    <property type="term" value="P:lipid A biosynthetic process"/>
    <property type="evidence" value="ECO:0007669"/>
    <property type="project" value="UniProtKB-UniRule"/>
</dbReference>
<dbReference type="GO" id="GO:0009244">
    <property type="term" value="P:lipopolysaccharide core region biosynthetic process"/>
    <property type="evidence" value="ECO:0007669"/>
    <property type="project" value="TreeGrafter"/>
</dbReference>
<dbReference type="HAMAP" id="MF_00409">
    <property type="entry name" value="LpxK"/>
    <property type="match status" value="1"/>
</dbReference>
<dbReference type="InterPro" id="IPR003758">
    <property type="entry name" value="LpxK"/>
</dbReference>
<dbReference type="InterPro" id="IPR027417">
    <property type="entry name" value="P-loop_NTPase"/>
</dbReference>
<dbReference type="NCBIfam" id="TIGR00682">
    <property type="entry name" value="lpxK"/>
    <property type="match status" value="1"/>
</dbReference>
<dbReference type="PANTHER" id="PTHR42724">
    <property type="entry name" value="TETRAACYLDISACCHARIDE 4'-KINASE"/>
    <property type="match status" value="1"/>
</dbReference>
<dbReference type="PANTHER" id="PTHR42724:SF1">
    <property type="entry name" value="TETRAACYLDISACCHARIDE 4'-KINASE, MITOCHONDRIAL-RELATED"/>
    <property type="match status" value="1"/>
</dbReference>
<dbReference type="Pfam" id="PF02606">
    <property type="entry name" value="LpxK"/>
    <property type="match status" value="1"/>
</dbReference>
<dbReference type="SUPFAM" id="SSF52540">
    <property type="entry name" value="P-loop containing nucleoside triphosphate hydrolases"/>
    <property type="match status" value="1"/>
</dbReference>
<protein>
    <recommendedName>
        <fullName evidence="1">Tetraacyldisaccharide 4'-kinase</fullName>
        <ecNumber evidence="1">2.7.1.130</ecNumber>
    </recommendedName>
    <alternativeName>
        <fullName evidence="1">Lipid A 4'-kinase</fullName>
    </alternativeName>
</protein>
<reference key="1">
    <citation type="journal article" date="2001" name="Mol. Biol. Evol.">
        <title>Pseudogenes, junk DNA, and the dynamics of Rickettsia genomes.</title>
        <authorList>
            <person name="Andersson J.O."/>
            <person name="Andersson S.G.E."/>
        </authorList>
    </citation>
    <scope>NUCLEOTIDE SEQUENCE [GENOMIC DNA]</scope>
    <source>
        <strain>84-21C</strain>
    </source>
</reference>
<comment type="function">
    <text evidence="1">Transfers the gamma-phosphate of ATP to the 4'-position of a tetraacyldisaccharide 1-phosphate intermediate (termed DS-1-P) to form tetraacyldisaccharide 1,4'-bis-phosphate (lipid IVA).</text>
</comment>
<comment type="catalytic activity">
    <reaction evidence="1">
        <text>a lipid A disaccharide + ATP = a lipid IVA + ADP + H(+)</text>
        <dbReference type="Rhea" id="RHEA:67840"/>
        <dbReference type="ChEBI" id="CHEBI:15378"/>
        <dbReference type="ChEBI" id="CHEBI:30616"/>
        <dbReference type="ChEBI" id="CHEBI:176343"/>
        <dbReference type="ChEBI" id="CHEBI:176425"/>
        <dbReference type="ChEBI" id="CHEBI:456216"/>
        <dbReference type="EC" id="2.7.1.130"/>
    </reaction>
</comment>
<comment type="pathway">
    <text evidence="1">Glycolipid biosynthesis; lipid IV(A) biosynthesis; lipid IV(A) from (3R)-3-hydroxytetradecanoyl-[acyl-carrier-protein] and UDP-N-acetyl-alpha-D-glucosamine: step 6/6.</text>
</comment>
<comment type="similarity">
    <text evidence="1">Belongs to the LpxK family.</text>
</comment>
<feature type="chain" id="PRO_0000190947" description="Tetraacyldisaccharide 4'-kinase">
    <location>
        <begin position="1"/>
        <end position="321"/>
    </location>
</feature>
<feature type="binding site" evidence="1">
    <location>
        <begin position="54"/>
        <end position="61"/>
    </location>
    <ligand>
        <name>ATP</name>
        <dbReference type="ChEBI" id="CHEBI:30616"/>
    </ligand>
</feature>
<name>LPXK_RICRI</name>
<organism>
    <name type="scientific">Rickettsia rickettsii</name>
    <dbReference type="NCBI Taxonomy" id="783"/>
    <lineage>
        <taxon>Bacteria</taxon>
        <taxon>Pseudomonadati</taxon>
        <taxon>Pseudomonadota</taxon>
        <taxon>Alphaproteobacteria</taxon>
        <taxon>Rickettsiales</taxon>
        <taxon>Rickettsiaceae</taxon>
        <taxon>Rickettsieae</taxon>
        <taxon>Rickettsia</taxon>
        <taxon>spotted fever group</taxon>
    </lineage>
</organism>
<gene>
    <name evidence="1" type="primary">lpxK</name>
</gene>
<evidence type="ECO:0000255" key="1">
    <source>
        <dbReference type="HAMAP-Rule" id="MF_00409"/>
    </source>
</evidence>
<sequence length="321" mass="36083">MIKLLYPEFWQKRNIIAYLLLPISLIYQFLGYLRASLARPIMLPAKVICVGNCSVGGTGKTQIVMYLAKLLKARNVSFVIVTKAYGSNLKSATTIHQGHTALEVGDEGVILAKYGAVIATKNIKEIVPLINELKPDIIIVDDFLQNPYFHKDFTIVSVDSQRLFGNGFLIPAGPLRQYPNKALDAADLIFLVSSHQDKIPQILTPYVNKLINAQIVPSNNIDKTKNYFAFSGIGNPERFFATLKNYGLNITGYKIFPDHYNYLQADLENLYSLAKEHNAILVTTRKDHVKFNDLNNNIVCLDVELSINHPDLLNEKIFKKA</sequence>
<keyword id="KW-0067">ATP-binding</keyword>
<keyword id="KW-0418">Kinase</keyword>
<keyword id="KW-0441">Lipid A biosynthesis</keyword>
<keyword id="KW-0444">Lipid biosynthesis</keyword>
<keyword id="KW-0443">Lipid metabolism</keyword>
<keyword id="KW-0547">Nucleotide-binding</keyword>
<keyword id="KW-0808">Transferase</keyword>